<sequence>MDLYTLLTSALCTLALPLLLLLTAAKLWEVYCLRRKDAACANPLPPGTMGLPFFGETLQMVLQRRRFLQVKRSQYGRIYKTHLFGSPTVRVTGAENVRQILMGEHKLVSVHWPASVRTILGAGCLSNLHDNEHKYTKKVIAQAFSREALANYVPQMEEEVRCSVNLWLQSGPCVLVYPAIKRMMFRIAMRLLLGCDPQRMDREQEETLLEAFEEMSRNLFSLPIDVPFSGLYRGLRARNLIHAQIEENIKEKLQREPDEHCKDALQLLIDYSRRNGEPINLQALKESATELLFGGHGTTASAATSLTSFLALHKDVLEKVRKELETQGLLSTKPEEKKELSIEVLQQLKYTSCVIKETLRLSPPVAGGFRVALKTFVLNGYQIPKGWNVIYSIADTHGEADLFPDTDKFNPDRFLTPLPRDSSRFGFIPFGGGVRCCIGKEFAKILLKVFVVELCRNCDWELLNGSPAMTTSPIICPVDNLPAKFKPFSSSI</sequence>
<keyword id="KW-0256">Endoplasmic reticulum</keyword>
<keyword id="KW-0349">Heme</keyword>
<keyword id="KW-0408">Iron</keyword>
<keyword id="KW-0443">Lipid metabolism</keyword>
<keyword id="KW-0472">Membrane</keyword>
<keyword id="KW-0479">Metal-binding</keyword>
<keyword id="KW-0492">Microsome</keyword>
<keyword id="KW-0503">Monooxygenase</keyword>
<keyword id="KW-0560">Oxidoreductase</keyword>
<keyword id="KW-1185">Reference proteome</keyword>
<reference key="1">
    <citation type="journal article" date="1998" name="EMBO J.">
        <title>Regionalized metabolic activity establishes boundaries of retinoic acid signalling.</title>
        <authorList>
            <person name="Hollemann T."/>
            <person name="Chen Y."/>
            <person name="Grunz H."/>
            <person name="Pieler T."/>
        </authorList>
    </citation>
    <scope>NUCLEOTIDE SEQUENCE [MRNA]</scope>
    <scope>FUNCTION</scope>
    <scope>INDUCTION</scope>
    <scope>TISSUE SPECIFICITY</scope>
    <scope>DEVELOPMENTAL STAGE</scope>
</reference>
<accession>O93323</accession>
<name>CP26A_XENLA</name>
<dbReference type="EC" id="1.14.13.-" evidence="2"/>
<dbReference type="EMBL" id="AF057566">
    <property type="protein sequence ID" value="AAC25158.1"/>
    <property type="molecule type" value="mRNA"/>
</dbReference>
<dbReference type="SMR" id="O93323"/>
<dbReference type="AGR" id="Xenbase:XB-GENE-17332184"/>
<dbReference type="Xenbase" id="XB-GENE-17332184">
    <property type="gene designation" value="cyp26a1.S"/>
</dbReference>
<dbReference type="OMA" id="KLWEVYM"/>
<dbReference type="Proteomes" id="UP000186698">
    <property type="component" value="Unplaced"/>
</dbReference>
<dbReference type="GO" id="GO:0005789">
    <property type="term" value="C:endoplasmic reticulum membrane"/>
    <property type="evidence" value="ECO:0007669"/>
    <property type="project" value="UniProtKB-SubCell"/>
</dbReference>
<dbReference type="GO" id="GO:0062182">
    <property type="term" value="F:all-trans retinoic acid 4-hydrolase activity"/>
    <property type="evidence" value="ECO:0007669"/>
    <property type="project" value="RHEA"/>
</dbReference>
<dbReference type="GO" id="GO:0020037">
    <property type="term" value="F:heme binding"/>
    <property type="evidence" value="ECO:0007669"/>
    <property type="project" value="InterPro"/>
</dbReference>
<dbReference type="GO" id="GO:0005506">
    <property type="term" value="F:iron ion binding"/>
    <property type="evidence" value="ECO:0007669"/>
    <property type="project" value="InterPro"/>
</dbReference>
<dbReference type="GO" id="GO:0004497">
    <property type="term" value="F:monooxygenase activity"/>
    <property type="evidence" value="ECO:0000318"/>
    <property type="project" value="GO_Central"/>
</dbReference>
<dbReference type="GO" id="GO:0008401">
    <property type="term" value="F:retinoic acid 4-hydroxylase activity"/>
    <property type="evidence" value="ECO:0000250"/>
    <property type="project" value="UniProtKB"/>
</dbReference>
<dbReference type="GO" id="GO:0007417">
    <property type="term" value="P:central nervous system development"/>
    <property type="evidence" value="ECO:0000318"/>
    <property type="project" value="GO_Central"/>
</dbReference>
<dbReference type="GO" id="GO:0034653">
    <property type="term" value="P:retinoic acid catabolic process"/>
    <property type="evidence" value="ECO:0000318"/>
    <property type="project" value="GO_Central"/>
</dbReference>
<dbReference type="GO" id="GO:0042573">
    <property type="term" value="P:retinoic acid metabolic process"/>
    <property type="evidence" value="ECO:0000250"/>
    <property type="project" value="UniProtKB"/>
</dbReference>
<dbReference type="GO" id="GO:0016125">
    <property type="term" value="P:sterol metabolic process"/>
    <property type="evidence" value="ECO:0007669"/>
    <property type="project" value="TreeGrafter"/>
</dbReference>
<dbReference type="CDD" id="cd20638">
    <property type="entry name" value="CYP26A1"/>
    <property type="match status" value="1"/>
</dbReference>
<dbReference type="FunFam" id="1.10.630.10:FF:000041">
    <property type="entry name" value="Cytochrome P450 26A1 isoform 1"/>
    <property type="match status" value="1"/>
</dbReference>
<dbReference type="Gene3D" id="1.10.630.10">
    <property type="entry name" value="Cytochrome P450"/>
    <property type="match status" value="1"/>
</dbReference>
<dbReference type="InterPro" id="IPR001128">
    <property type="entry name" value="Cyt_P450"/>
</dbReference>
<dbReference type="InterPro" id="IPR017972">
    <property type="entry name" value="Cyt_P450_CS"/>
</dbReference>
<dbReference type="InterPro" id="IPR002403">
    <property type="entry name" value="Cyt_P450_E_grp-IV"/>
</dbReference>
<dbReference type="InterPro" id="IPR036396">
    <property type="entry name" value="Cyt_P450_sf"/>
</dbReference>
<dbReference type="PANTHER" id="PTHR24286">
    <property type="entry name" value="CYTOCHROME P450 26"/>
    <property type="match status" value="1"/>
</dbReference>
<dbReference type="PANTHER" id="PTHR24286:SF101">
    <property type="entry name" value="CYTOCHROME P450 26A1"/>
    <property type="match status" value="1"/>
</dbReference>
<dbReference type="Pfam" id="PF00067">
    <property type="entry name" value="p450"/>
    <property type="match status" value="1"/>
</dbReference>
<dbReference type="PRINTS" id="PR00465">
    <property type="entry name" value="EP450IV"/>
</dbReference>
<dbReference type="PRINTS" id="PR00385">
    <property type="entry name" value="P450"/>
</dbReference>
<dbReference type="SUPFAM" id="SSF48264">
    <property type="entry name" value="Cytochrome P450"/>
    <property type="match status" value="1"/>
</dbReference>
<dbReference type="PROSITE" id="PS00086">
    <property type="entry name" value="CYTOCHROME_P450"/>
    <property type="match status" value="1"/>
</dbReference>
<evidence type="ECO:0000250" key="1"/>
<evidence type="ECO:0000250" key="2">
    <source>
        <dbReference type="UniProtKB" id="O43174"/>
    </source>
</evidence>
<evidence type="ECO:0000255" key="3"/>
<evidence type="ECO:0000269" key="4">
    <source>
    </source>
</evidence>
<evidence type="ECO:0000303" key="5">
    <source>
    </source>
</evidence>
<evidence type="ECO:0000305" key="6"/>
<proteinExistence type="evidence at transcript level"/>
<feature type="chain" id="PRO_0000051984" description="Cytochrome P450 26A1">
    <location>
        <begin position="1"/>
        <end position="492"/>
    </location>
</feature>
<feature type="binding site" description="axial binding residue" evidence="3">
    <location>
        <position position="437"/>
    </location>
    <ligand>
        <name>heme</name>
        <dbReference type="ChEBI" id="CHEBI:30413"/>
    </ligand>
    <ligandPart>
        <name>Fe</name>
        <dbReference type="ChEBI" id="CHEBI:18248"/>
    </ligandPart>
</feature>
<comment type="function">
    <text evidence="2 4">A cytochrome P450 monooxygenase involved in the metabolism of all-trans retinoic acid (atRA), a signaling molecule that binds to retinoic acid receptors and regulates gene transcription. May regulate at-RA signaling during hindbrain development (PubMed:9857192). Mechanistically, uses molecular oxygen inserting one oxygen atom into a substrate, and reducing the second into a water molecule, with two electrons provided by NADPH via cytochrome P450 reductase (CPR; NADPH-ferrihemoprotein reductase). Catalyzes the hydroxylation of carbon hydrogen bonds of atRA primarily at C-4. Has no activity toward 9-cis and 13-cis retinoic acid stereoisomers. May play a role in the oxidative metabolism of xenobiotics such as tazarotenic acid (By similarity).</text>
</comment>
<comment type="catalytic activity">
    <reaction evidence="2">
        <text>all-trans-retinoate + reduced [NADPH--hemoprotein reductase] + O2 = all-trans-(4S)-hydroxyretinoate + oxidized [NADPH--hemoprotein reductase] + H2O + H(+)</text>
        <dbReference type="Rhea" id="RHEA:51492"/>
        <dbReference type="Rhea" id="RHEA-COMP:11964"/>
        <dbReference type="Rhea" id="RHEA-COMP:11965"/>
        <dbReference type="ChEBI" id="CHEBI:15377"/>
        <dbReference type="ChEBI" id="CHEBI:15378"/>
        <dbReference type="ChEBI" id="CHEBI:15379"/>
        <dbReference type="ChEBI" id="CHEBI:35291"/>
        <dbReference type="ChEBI" id="CHEBI:57618"/>
        <dbReference type="ChEBI" id="CHEBI:58210"/>
        <dbReference type="ChEBI" id="CHEBI:134185"/>
    </reaction>
    <physiologicalReaction direction="left-to-right" evidence="2">
        <dbReference type="Rhea" id="RHEA:51493"/>
    </physiologicalReaction>
</comment>
<comment type="cofactor">
    <cofactor evidence="1">
        <name>heme</name>
        <dbReference type="ChEBI" id="CHEBI:30413"/>
    </cofactor>
</comment>
<comment type="subcellular location">
    <subcellularLocation>
        <location evidence="2">Endoplasmic reticulum membrane</location>
        <topology>Peripheral membrane protein</topology>
    </subcellularLocation>
    <subcellularLocation>
        <location evidence="2">Microsome membrane</location>
        <topology>Peripheral membrane protein</topology>
    </subcellularLocation>
</comment>
<comment type="tissue specificity">
    <text evidence="4">Expressed primarily in ovary, brain and eyes.</text>
</comment>
<comment type="developmental stage">
    <text evidence="4">At the onset of gastrulation, expressed within the marginal zone and in the dorsal animal hemisphere. In advanced gastrulae (stage 13), detected in the prospective neuroectoderm and the underlying involuted mesoderm, in an area that corresponds to the prechordal plate. At stage 14, expressed in the cement gland anlage, the mid-/hindbrain boundary and the auditory placodes. At tadpole stages of development, most prominent in the first, second and third branchial arch, in the lens epithelium and in the posterior dorsal fin, as well as in the posterior wall of the tail tip.</text>
</comment>
<comment type="induction">
    <text evidence="4">By retinoic acid.</text>
</comment>
<comment type="similarity">
    <text evidence="6">Belongs to the cytochrome P450 family.</text>
</comment>
<organism>
    <name type="scientific">Xenopus laevis</name>
    <name type="common">African clawed frog</name>
    <dbReference type="NCBI Taxonomy" id="8355"/>
    <lineage>
        <taxon>Eukaryota</taxon>
        <taxon>Metazoa</taxon>
        <taxon>Chordata</taxon>
        <taxon>Craniata</taxon>
        <taxon>Vertebrata</taxon>
        <taxon>Euteleostomi</taxon>
        <taxon>Amphibia</taxon>
        <taxon>Batrachia</taxon>
        <taxon>Anura</taxon>
        <taxon>Pipoidea</taxon>
        <taxon>Pipidae</taxon>
        <taxon>Xenopodinae</taxon>
        <taxon>Xenopus</taxon>
        <taxon>Xenopus</taxon>
    </lineage>
</organism>
<gene>
    <name type="primary">cyp26a1</name>
    <name type="synonym">cyp26</name>
</gene>
<protein>
    <recommendedName>
        <fullName>Cytochrome P450 26A1</fullName>
        <ecNumber evidence="2">1.14.13.-</ecNumber>
    </recommendedName>
    <alternativeName>
        <fullName>Retinoic acid-converting enzyme</fullName>
        <shortName>RACE</shortName>
    </alternativeName>
    <alternativeName>
        <fullName>Retinoic acid-degrading enzyme CYP26</fullName>
        <shortName evidence="5">xCYP26</shortName>
    </alternativeName>
</protein>